<organism>
    <name type="scientific">Bacillus velezensis (strain DSM 23117 / BGSC 10A6 / LMG 26770 / FZB42)</name>
    <name type="common">Bacillus amyloliquefaciens subsp. plantarum</name>
    <dbReference type="NCBI Taxonomy" id="326423"/>
    <lineage>
        <taxon>Bacteria</taxon>
        <taxon>Bacillati</taxon>
        <taxon>Bacillota</taxon>
        <taxon>Bacilli</taxon>
        <taxon>Bacillales</taxon>
        <taxon>Bacillaceae</taxon>
        <taxon>Bacillus</taxon>
        <taxon>Bacillus amyloliquefaciens group</taxon>
    </lineage>
</organism>
<evidence type="ECO:0000250" key="1"/>
<evidence type="ECO:0000305" key="2"/>
<feature type="chain" id="PRO_0000352277" description="Inosose isomerase">
    <location>
        <begin position="1"/>
        <end position="280"/>
    </location>
</feature>
<feature type="binding site" evidence="1">
    <location>
        <position position="142"/>
    </location>
    <ligand>
        <name>a divalent metal cation</name>
        <dbReference type="ChEBI" id="CHEBI:60240"/>
    </ligand>
</feature>
<feature type="binding site" evidence="1">
    <location>
        <position position="174"/>
    </location>
    <ligand>
        <name>a divalent metal cation</name>
        <dbReference type="ChEBI" id="CHEBI:60240"/>
    </ligand>
</feature>
<feature type="binding site" evidence="1">
    <location>
        <position position="200"/>
    </location>
    <ligand>
        <name>a divalent metal cation</name>
        <dbReference type="ChEBI" id="CHEBI:60240"/>
    </ligand>
</feature>
<feature type="binding site" evidence="1">
    <location>
        <position position="246"/>
    </location>
    <ligand>
        <name>a divalent metal cation</name>
        <dbReference type="ChEBI" id="CHEBI:60240"/>
    </ligand>
</feature>
<reference key="1">
    <citation type="journal article" date="2007" name="Nat. Biotechnol.">
        <title>Comparative analysis of the complete genome sequence of the plant growth-promoting bacterium Bacillus amyloliquefaciens FZB42.</title>
        <authorList>
            <person name="Chen X.H."/>
            <person name="Koumoutsi A."/>
            <person name="Scholz R."/>
            <person name="Eisenreich A."/>
            <person name="Schneider K."/>
            <person name="Heinemeyer I."/>
            <person name="Morgenstern B."/>
            <person name="Voss B."/>
            <person name="Hess W.R."/>
            <person name="Reva O."/>
            <person name="Junge H."/>
            <person name="Voigt B."/>
            <person name="Jungblut P.R."/>
            <person name="Vater J."/>
            <person name="Suessmuth R."/>
            <person name="Liesegang H."/>
            <person name="Strittmatter A."/>
            <person name="Gottschalk G."/>
            <person name="Borriss R."/>
        </authorList>
    </citation>
    <scope>NUCLEOTIDE SEQUENCE [LARGE SCALE GENOMIC DNA]</scope>
    <source>
        <strain>DSM 23117 / BGSC 10A6 / LMG 26770 / FZB42</strain>
    </source>
</reference>
<sequence>MKLCFNEATTLENSNLKQDLELCEKHGYDYIEIRTMDKLPEYLKDHSLADLAEYFRTHHIKPLALNALVFFNNRDEKGYREIISEFKSMMETCRTLGVKYVVAVPLVTERKILKEEIKKSSAEVLTELSDIAEPYGVNIALEFVGHPQCTVNTFEQAYDIVNAVGRDNVGLVFDSFHFHAMGSNIESLKQADGKKIFIYHIDDTEDFPIGFLTDEDRVWPGQGAIDLDAHLSALKEIGFNDVVSVELFRPEYYKLTAEETIKTAKETTEAVVSKYFMKEA</sequence>
<comment type="function">
    <text evidence="1">Involved in the reversible interconverion of 2-keto-myo-inositol (2KMI, inosose or 2,4,6/3,5-pentahydroxycyclohexanone) to 1-keto-D-chiro-inositol (1KDCI or 2,3,5/4,6-pentahydroxycyclohexanone).</text>
</comment>
<comment type="catalytic activity">
    <reaction>
        <text>scyllo-inosose = scyllo-inosine</text>
        <dbReference type="Rhea" id="RHEA:25776"/>
        <dbReference type="ChEBI" id="CHEBI:17811"/>
        <dbReference type="ChEBI" id="CHEBI:50920"/>
        <dbReference type="EC" id="5.3.99.11"/>
    </reaction>
</comment>
<comment type="cofactor">
    <cofactor evidence="1">
        <name>a divalent metal cation</name>
        <dbReference type="ChEBI" id="CHEBI:60240"/>
    </cofactor>
    <text evidence="1">Binds 1 divalent metal cation per subunit.</text>
</comment>
<comment type="pathway">
    <text>Polyol metabolism; myo-inositol degradation into acetyl-CoA.</text>
</comment>
<comment type="similarity">
    <text evidence="2">Belongs to the IolI family.</text>
</comment>
<protein>
    <recommendedName>
        <fullName>Inosose isomerase</fullName>
        <ecNumber>5.3.99.11</ecNumber>
    </recommendedName>
    <alternativeName>
        <fullName>2-keto-myo-inositol isomerase</fullName>
        <shortName>2KMI isomerase</shortName>
    </alternativeName>
</protein>
<dbReference type="EC" id="5.3.99.11"/>
<dbReference type="EMBL" id="CP000560">
    <property type="protein sequence ID" value="ABS75999.1"/>
    <property type="molecule type" value="Genomic_DNA"/>
</dbReference>
<dbReference type="RefSeq" id="WP_012118841.1">
    <property type="nucleotide sequence ID" value="NC_009725.2"/>
</dbReference>
<dbReference type="SMR" id="A7ZAH3"/>
<dbReference type="GeneID" id="93082809"/>
<dbReference type="KEGG" id="bay:RBAM_036700"/>
<dbReference type="HOGENOM" id="CLU_035063_3_0_9"/>
<dbReference type="UniPathway" id="UPA00076"/>
<dbReference type="Proteomes" id="UP000001120">
    <property type="component" value="Chromosome"/>
</dbReference>
<dbReference type="GO" id="GO:0016853">
    <property type="term" value="F:isomerase activity"/>
    <property type="evidence" value="ECO:0007669"/>
    <property type="project" value="UniProtKB-KW"/>
</dbReference>
<dbReference type="GO" id="GO:0046872">
    <property type="term" value="F:metal ion binding"/>
    <property type="evidence" value="ECO:0007669"/>
    <property type="project" value="UniProtKB-KW"/>
</dbReference>
<dbReference type="Gene3D" id="3.20.20.150">
    <property type="entry name" value="Divalent-metal-dependent TIM barrel enzymes"/>
    <property type="match status" value="1"/>
</dbReference>
<dbReference type="InterPro" id="IPR050312">
    <property type="entry name" value="IolE/XylAMocC-like"/>
</dbReference>
<dbReference type="InterPro" id="IPR036237">
    <property type="entry name" value="Xyl_isomerase-like_sf"/>
</dbReference>
<dbReference type="InterPro" id="IPR013022">
    <property type="entry name" value="Xyl_isomerase-like_TIM-brl"/>
</dbReference>
<dbReference type="PANTHER" id="PTHR12110">
    <property type="entry name" value="HYDROXYPYRUVATE ISOMERASE"/>
    <property type="match status" value="1"/>
</dbReference>
<dbReference type="PANTHER" id="PTHR12110:SF21">
    <property type="entry name" value="XYLOSE ISOMERASE-LIKE TIM BARREL DOMAIN-CONTAINING PROTEIN"/>
    <property type="match status" value="1"/>
</dbReference>
<dbReference type="Pfam" id="PF01261">
    <property type="entry name" value="AP_endonuc_2"/>
    <property type="match status" value="1"/>
</dbReference>
<dbReference type="SUPFAM" id="SSF51658">
    <property type="entry name" value="Xylose isomerase-like"/>
    <property type="match status" value="1"/>
</dbReference>
<keyword id="KW-0413">Isomerase</keyword>
<keyword id="KW-0479">Metal-binding</keyword>
<name>IOLI_BACVZ</name>
<accession>A7ZAH3</accession>
<gene>
    <name type="primary">iolI</name>
    <name type="ordered locus">RBAM_036700</name>
</gene>
<proteinExistence type="inferred from homology"/>